<protein>
    <recommendedName>
        <fullName evidence="1">UPF0319 protein YpAngola_A3206</fullName>
    </recommendedName>
</protein>
<gene>
    <name type="ordered locus">YpAngola_A3206</name>
</gene>
<accession>A9R2N6</accession>
<sequence>MKLGLVAGMLAVCFSFSSVAMTLKLTPEIDLLVVDGKNMSGSLLKGADSLELNSGMHQILFKVIKTLPTDPLVLYSSPPLIVVFNAHNTRSVAIKLPVINTLRDGHQFSKNPLYQLIGDNGHPLSVRHDVLRQDHLNNSTTLETVMAAYNVGKYNASVPAFAAIPPSPVSAVPGTTIPVAGVNTPHKTASLQGENVTEQMLQYWFLQANPETQKRFLIWAKKQPIH</sequence>
<evidence type="ECO:0000255" key="1">
    <source>
        <dbReference type="HAMAP-Rule" id="MF_00789"/>
    </source>
</evidence>
<name>Y3206_YERPG</name>
<proteinExistence type="inferred from homology"/>
<keyword id="KW-0732">Signal</keyword>
<reference key="1">
    <citation type="journal article" date="2010" name="J. Bacteriol.">
        <title>Genome sequence of the deep-rooted Yersinia pestis strain Angola reveals new insights into the evolution and pangenome of the plague bacterium.</title>
        <authorList>
            <person name="Eppinger M."/>
            <person name="Worsham P.L."/>
            <person name="Nikolich M.P."/>
            <person name="Riley D.R."/>
            <person name="Sebastian Y."/>
            <person name="Mou S."/>
            <person name="Achtman M."/>
            <person name="Lindler L.E."/>
            <person name="Ravel J."/>
        </authorList>
    </citation>
    <scope>NUCLEOTIDE SEQUENCE [LARGE SCALE GENOMIC DNA]</scope>
    <source>
        <strain>Angola</strain>
    </source>
</reference>
<comment type="similarity">
    <text evidence="1">Belongs to the UPF0319 family.</text>
</comment>
<organism>
    <name type="scientific">Yersinia pestis bv. Antiqua (strain Angola)</name>
    <dbReference type="NCBI Taxonomy" id="349746"/>
    <lineage>
        <taxon>Bacteria</taxon>
        <taxon>Pseudomonadati</taxon>
        <taxon>Pseudomonadota</taxon>
        <taxon>Gammaproteobacteria</taxon>
        <taxon>Enterobacterales</taxon>
        <taxon>Yersiniaceae</taxon>
        <taxon>Yersinia</taxon>
    </lineage>
</organism>
<dbReference type="EMBL" id="CP000901">
    <property type="protein sequence ID" value="ABX86089.1"/>
    <property type="molecule type" value="Genomic_DNA"/>
</dbReference>
<dbReference type="RefSeq" id="WP_012229900.1">
    <property type="nucleotide sequence ID" value="NC_010159.1"/>
</dbReference>
<dbReference type="KEGG" id="ypg:YpAngola_A3206"/>
<dbReference type="PATRIC" id="fig|349746.12.peg.4267"/>
<dbReference type="HAMAP" id="MF_00789">
    <property type="entry name" value="UPF0319"/>
    <property type="match status" value="1"/>
</dbReference>
<dbReference type="InterPro" id="IPR018635">
    <property type="entry name" value="UPF0319"/>
</dbReference>
<dbReference type="NCBIfam" id="NF002967">
    <property type="entry name" value="PRK03641.1"/>
    <property type="match status" value="1"/>
</dbReference>
<dbReference type="PANTHER" id="PTHR38108">
    <property type="entry name" value="UPF0319 PROTEIN YCCT"/>
    <property type="match status" value="1"/>
</dbReference>
<dbReference type="PANTHER" id="PTHR38108:SF1">
    <property type="entry name" value="UPF0319 PROTEIN YCCT"/>
    <property type="match status" value="1"/>
</dbReference>
<dbReference type="Pfam" id="PF09829">
    <property type="entry name" value="DUF2057"/>
    <property type="match status" value="1"/>
</dbReference>
<feature type="signal peptide" evidence="1">
    <location>
        <begin position="1"/>
        <end position="20"/>
    </location>
</feature>
<feature type="chain" id="PRO_1000200501" description="UPF0319 protein YpAngola_A3206">
    <location>
        <begin position="21"/>
        <end position="226"/>
    </location>
</feature>